<sequence length="324" mass="36225">MKNVAIVSGGYSSECVISLKSAEEVYLSIDKTRYNPYIVLITRNGWTVQGGNKTEFPINKNDFSFIYKGKQIRFDFAYIIIHGTPGEDGLLQGYLDILNIPYSCCGVLSASITFNKYFCNNYLRGFGVETAKSILLKQREQIISPERIIDKLGLPLIVKPNDGGSSFGVTKVTNITQIQLAIRNAFNEGEGVLIESFIPGTEITCGYYKTKNKQVTLPITEIISKNDFFDFEAKYNPGMVEEITPARISKKLTDEIQTLTAHIYDWVGAKGIIRIDYIISPKKEIKMLEVNTIPGMTATSFIPQQIRAAGLNLKEILTEIIESI</sequence>
<feature type="chain" id="PRO_1000116633" description="D-alanine--D-alanine ligase">
    <location>
        <begin position="1"/>
        <end position="324"/>
    </location>
</feature>
<feature type="domain" description="ATP-grasp" evidence="2">
    <location>
        <begin position="120"/>
        <end position="322"/>
    </location>
</feature>
<feature type="binding site" evidence="2">
    <location>
        <begin position="149"/>
        <end position="204"/>
    </location>
    <ligand>
        <name>ATP</name>
        <dbReference type="ChEBI" id="CHEBI:30616"/>
    </ligand>
</feature>
<feature type="binding site" evidence="2">
    <location>
        <position position="276"/>
    </location>
    <ligand>
        <name>Mg(2+)</name>
        <dbReference type="ChEBI" id="CHEBI:18420"/>
        <label>1</label>
    </ligand>
</feature>
<feature type="binding site" evidence="2">
    <location>
        <position position="289"/>
    </location>
    <ligand>
        <name>Mg(2+)</name>
        <dbReference type="ChEBI" id="CHEBI:18420"/>
        <label>1</label>
    </ligand>
</feature>
<feature type="binding site" evidence="2">
    <location>
        <position position="289"/>
    </location>
    <ligand>
        <name>Mg(2+)</name>
        <dbReference type="ChEBI" id="CHEBI:18420"/>
        <label>2</label>
    </ligand>
</feature>
<feature type="binding site" evidence="2">
    <location>
        <position position="291"/>
    </location>
    <ligand>
        <name>Mg(2+)</name>
        <dbReference type="ChEBI" id="CHEBI:18420"/>
        <label>2</label>
    </ligand>
</feature>
<comment type="function">
    <text evidence="2">Cell wall formation.</text>
</comment>
<comment type="catalytic activity">
    <reaction evidence="2">
        <text>2 D-alanine + ATP = D-alanyl-D-alanine + ADP + phosphate + H(+)</text>
        <dbReference type="Rhea" id="RHEA:11224"/>
        <dbReference type="ChEBI" id="CHEBI:15378"/>
        <dbReference type="ChEBI" id="CHEBI:30616"/>
        <dbReference type="ChEBI" id="CHEBI:43474"/>
        <dbReference type="ChEBI" id="CHEBI:57416"/>
        <dbReference type="ChEBI" id="CHEBI:57822"/>
        <dbReference type="ChEBI" id="CHEBI:456216"/>
        <dbReference type="EC" id="6.3.2.4"/>
    </reaction>
</comment>
<comment type="cofactor">
    <cofactor evidence="1">
        <name>Mg(2+)</name>
        <dbReference type="ChEBI" id="CHEBI:18420"/>
    </cofactor>
    <cofactor evidence="1">
        <name>Mn(2+)</name>
        <dbReference type="ChEBI" id="CHEBI:29035"/>
    </cofactor>
    <text evidence="1">Binds 2 magnesium or manganese ions per subunit.</text>
</comment>
<comment type="pathway">
    <text evidence="2">Cell wall biogenesis; peptidoglycan biosynthesis.</text>
</comment>
<comment type="subcellular location">
    <subcellularLocation>
        <location evidence="2">Cytoplasm</location>
    </subcellularLocation>
</comment>
<comment type="similarity">
    <text evidence="2">Belongs to the D-alanine--D-alanine ligase family.</text>
</comment>
<name>DDL_AZOPC</name>
<accession>B6YQA7</accession>
<keyword id="KW-0067">ATP-binding</keyword>
<keyword id="KW-0133">Cell shape</keyword>
<keyword id="KW-0961">Cell wall biogenesis/degradation</keyword>
<keyword id="KW-0963">Cytoplasm</keyword>
<keyword id="KW-0436">Ligase</keyword>
<keyword id="KW-0460">Magnesium</keyword>
<keyword id="KW-0464">Manganese</keyword>
<keyword id="KW-0479">Metal-binding</keyword>
<keyword id="KW-0547">Nucleotide-binding</keyword>
<keyword id="KW-0573">Peptidoglycan synthesis</keyword>
<keyword id="KW-1185">Reference proteome</keyword>
<gene>
    <name evidence="2" type="primary">ddl</name>
    <name type="ordered locus">CFPG_116</name>
</gene>
<evidence type="ECO:0000250" key="1"/>
<evidence type="ECO:0000255" key="2">
    <source>
        <dbReference type="HAMAP-Rule" id="MF_00047"/>
    </source>
</evidence>
<dbReference type="EC" id="6.3.2.4" evidence="2"/>
<dbReference type="EMBL" id="AP010656">
    <property type="protein sequence ID" value="BAG83379.1"/>
    <property type="molecule type" value="Genomic_DNA"/>
</dbReference>
<dbReference type="RefSeq" id="WP_012573140.1">
    <property type="nucleotide sequence ID" value="NC_011565.1"/>
</dbReference>
<dbReference type="SMR" id="B6YQA7"/>
<dbReference type="STRING" id="511995.CFPG_116"/>
<dbReference type="KEGG" id="aps:CFPG_116"/>
<dbReference type="eggNOG" id="COG1181">
    <property type="taxonomic scope" value="Bacteria"/>
</dbReference>
<dbReference type="HOGENOM" id="CLU_039268_1_1_10"/>
<dbReference type="OrthoDB" id="9813261at2"/>
<dbReference type="UniPathway" id="UPA00219"/>
<dbReference type="Proteomes" id="UP000000723">
    <property type="component" value="Chromosome"/>
</dbReference>
<dbReference type="GO" id="GO:0005737">
    <property type="term" value="C:cytoplasm"/>
    <property type="evidence" value="ECO:0007669"/>
    <property type="project" value="UniProtKB-SubCell"/>
</dbReference>
<dbReference type="GO" id="GO:0005524">
    <property type="term" value="F:ATP binding"/>
    <property type="evidence" value="ECO:0007669"/>
    <property type="project" value="UniProtKB-KW"/>
</dbReference>
<dbReference type="GO" id="GO:0008716">
    <property type="term" value="F:D-alanine-D-alanine ligase activity"/>
    <property type="evidence" value="ECO:0007669"/>
    <property type="project" value="UniProtKB-UniRule"/>
</dbReference>
<dbReference type="GO" id="GO:0046872">
    <property type="term" value="F:metal ion binding"/>
    <property type="evidence" value="ECO:0007669"/>
    <property type="project" value="UniProtKB-KW"/>
</dbReference>
<dbReference type="GO" id="GO:0071555">
    <property type="term" value="P:cell wall organization"/>
    <property type="evidence" value="ECO:0007669"/>
    <property type="project" value="UniProtKB-KW"/>
</dbReference>
<dbReference type="GO" id="GO:0009252">
    <property type="term" value="P:peptidoglycan biosynthetic process"/>
    <property type="evidence" value="ECO:0007669"/>
    <property type="project" value="UniProtKB-UniRule"/>
</dbReference>
<dbReference type="GO" id="GO:0008360">
    <property type="term" value="P:regulation of cell shape"/>
    <property type="evidence" value="ECO:0007669"/>
    <property type="project" value="UniProtKB-KW"/>
</dbReference>
<dbReference type="Gene3D" id="3.40.50.20">
    <property type="match status" value="1"/>
</dbReference>
<dbReference type="Gene3D" id="3.30.1490.20">
    <property type="entry name" value="ATP-grasp fold, A domain"/>
    <property type="match status" value="1"/>
</dbReference>
<dbReference type="Gene3D" id="3.30.470.20">
    <property type="entry name" value="ATP-grasp fold, B domain"/>
    <property type="match status" value="1"/>
</dbReference>
<dbReference type="HAMAP" id="MF_00047">
    <property type="entry name" value="Dala_Dala_lig"/>
    <property type="match status" value="1"/>
</dbReference>
<dbReference type="InterPro" id="IPR011761">
    <property type="entry name" value="ATP-grasp"/>
</dbReference>
<dbReference type="InterPro" id="IPR013815">
    <property type="entry name" value="ATP_grasp_subdomain_1"/>
</dbReference>
<dbReference type="InterPro" id="IPR000291">
    <property type="entry name" value="D-Ala_lig_Van_CS"/>
</dbReference>
<dbReference type="InterPro" id="IPR005905">
    <property type="entry name" value="D_ala_D_ala"/>
</dbReference>
<dbReference type="InterPro" id="IPR011095">
    <property type="entry name" value="Dala_Dala_lig_C"/>
</dbReference>
<dbReference type="InterPro" id="IPR011127">
    <property type="entry name" value="Dala_Dala_lig_N"/>
</dbReference>
<dbReference type="InterPro" id="IPR016185">
    <property type="entry name" value="PreATP-grasp_dom_sf"/>
</dbReference>
<dbReference type="NCBIfam" id="TIGR01205">
    <property type="entry name" value="D_ala_D_alaTIGR"/>
    <property type="match status" value="1"/>
</dbReference>
<dbReference type="NCBIfam" id="NF002378">
    <property type="entry name" value="PRK01372.1"/>
    <property type="match status" value="1"/>
</dbReference>
<dbReference type="NCBIfam" id="NF002527">
    <property type="entry name" value="PRK01966.1-3"/>
    <property type="match status" value="1"/>
</dbReference>
<dbReference type="PANTHER" id="PTHR23132">
    <property type="entry name" value="D-ALANINE--D-ALANINE LIGASE"/>
    <property type="match status" value="1"/>
</dbReference>
<dbReference type="PANTHER" id="PTHR23132:SF23">
    <property type="entry name" value="D-ALANINE--D-ALANINE LIGASE B"/>
    <property type="match status" value="1"/>
</dbReference>
<dbReference type="Pfam" id="PF07478">
    <property type="entry name" value="Dala_Dala_lig_C"/>
    <property type="match status" value="1"/>
</dbReference>
<dbReference type="Pfam" id="PF01820">
    <property type="entry name" value="Dala_Dala_lig_N"/>
    <property type="match status" value="1"/>
</dbReference>
<dbReference type="PIRSF" id="PIRSF039102">
    <property type="entry name" value="Ddl/VanB"/>
    <property type="match status" value="1"/>
</dbReference>
<dbReference type="SUPFAM" id="SSF56059">
    <property type="entry name" value="Glutathione synthetase ATP-binding domain-like"/>
    <property type="match status" value="1"/>
</dbReference>
<dbReference type="SUPFAM" id="SSF52440">
    <property type="entry name" value="PreATP-grasp domain"/>
    <property type="match status" value="1"/>
</dbReference>
<dbReference type="PROSITE" id="PS50975">
    <property type="entry name" value="ATP_GRASP"/>
    <property type="match status" value="1"/>
</dbReference>
<dbReference type="PROSITE" id="PS00843">
    <property type="entry name" value="DALA_DALA_LIGASE_1"/>
    <property type="match status" value="1"/>
</dbReference>
<organism>
    <name type="scientific">Azobacteroides pseudotrichonymphae genomovar. CFP2</name>
    <dbReference type="NCBI Taxonomy" id="511995"/>
    <lineage>
        <taxon>Bacteria</taxon>
        <taxon>Pseudomonadati</taxon>
        <taxon>Bacteroidota</taxon>
        <taxon>Bacteroidia</taxon>
        <taxon>Bacteroidales</taxon>
        <taxon>Candidatus Azobacteroides</taxon>
    </lineage>
</organism>
<proteinExistence type="inferred from homology"/>
<protein>
    <recommendedName>
        <fullName evidence="2">D-alanine--D-alanine ligase</fullName>
        <ecNumber evidence="2">6.3.2.4</ecNumber>
    </recommendedName>
    <alternativeName>
        <fullName evidence="2">D-Ala-D-Ala ligase</fullName>
    </alternativeName>
    <alternativeName>
        <fullName evidence="2">D-alanylalanine synthetase</fullName>
    </alternativeName>
</protein>
<reference key="1">
    <citation type="journal article" date="2008" name="Science">
        <title>Genome of an endosymbiont coupling N2 fixation to cellulolysis within RT protist cells in termite gut.</title>
        <authorList>
            <person name="Hongoh Y."/>
            <person name="Sharma V.K."/>
            <person name="Prakash T."/>
            <person name="Noda S."/>
            <person name="Toh H."/>
            <person name="Taylor T.D."/>
            <person name="Kudo T."/>
            <person name="Sakaki Y."/>
            <person name="Toyoda A."/>
            <person name="Hattori M."/>
            <person name="Ohkuma M."/>
        </authorList>
    </citation>
    <scope>NUCLEOTIDE SEQUENCE [LARGE SCALE GENOMIC DNA]</scope>
</reference>